<reference key="1">
    <citation type="journal article" date="2010" name="Genome Biol. Evol.">
        <title>Continuing evolution of Burkholderia mallei through genome reduction and large-scale rearrangements.</title>
        <authorList>
            <person name="Losada L."/>
            <person name="Ronning C.M."/>
            <person name="DeShazer D."/>
            <person name="Woods D."/>
            <person name="Fedorova N."/>
            <person name="Kim H.S."/>
            <person name="Shabalina S.A."/>
            <person name="Pearson T.R."/>
            <person name="Brinkac L."/>
            <person name="Tan P."/>
            <person name="Nandi T."/>
            <person name="Crabtree J."/>
            <person name="Badger J."/>
            <person name="Beckstrom-Sternberg S."/>
            <person name="Saqib M."/>
            <person name="Schutzer S.E."/>
            <person name="Keim P."/>
            <person name="Nierman W.C."/>
        </authorList>
    </citation>
    <scope>NUCLEOTIDE SEQUENCE [LARGE SCALE GENOMIC DNA]</scope>
    <source>
        <strain>668</strain>
    </source>
</reference>
<dbReference type="EMBL" id="CP000570">
    <property type="protein sequence ID" value="ABN81831.1"/>
    <property type="molecule type" value="Genomic_DNA"/>
</dbReference>
<dbReference type="RefSeq" id="WP_004193360.1">
    <property type="nucleotide sequence ID" value="NC_009074.1"/>
</dbReference>
<dbReference type="SMR" id="A3NAB4"/>
<dbReference type="GeneID" id="93173028"/>
<dbReference type="KEGG" id="bpd:BURPS668_2250"/>
<dbReference type="HOGENOM" id="CLU_148710_0_3_4"/>
<dbReference type="GO" id="GO:0022627">
    <property type="term" value="C:cytosolic small ribosomal subunit"/>
    <property type="evidence" value="ECO:0007669"/>
    <property type="project" value="TreeGrafter"/>
</dbReference>
<dbReference type="GO" id="GO:0070181">
    <property type="term" value="F:small ribosomal subunit rRNA binding"/>
    <property type="evidence" value="ECO:0007669"/>
    <property type="project" value="TreeGrafter"/>
</dbReference>
<dbReference type="GO" id="GO:0003735">
    <property type="term" value="F:structural constituent of ribosome"/>
    <property type="evidence" value="ECO:0007669"/>
    <property type="project" value="InterPro"/>
</dbReference>
<dbReference type="GO" id="GO:0006412">
    <property type="term" value="P:translation"/>
    <property type="evidence" value="ECO:0007669"/>
    <property type="project" value="UniProtKB-UniRule"/>
</dbReference>
<dbReference type="Gene3D" id="4.10.640.10">
    <property type="entry name" value="Ribosomal protein S18"/>
    <property type="match status" value="1"/>
</dbReference>
<dbReference type="HAMAP" id="MF_00270">
    <property type="entry name" value="Ribosomal_bS18"/>
    <property type="match status" value="1"/>
</dbReference>
<dbReference type="InterPro" id="IPR001648">
    <property type="entry name" value="Ribosomal_bS18"/>
</dbReference>
<dbReference type="InterPro" id="IPR018275">
    <property type="entry name" value="Ribosomal_bS18_CS"/>
</dbReference>
<dbReference type="InterPro" id="IPR036870">
    <property type="entry name" value="Ribosomal_bS18_sf"/>
</dbReference>
<dbReference type="NCBIfam" id="TIGR00165">
    <property type="entry name" value="S18"/>
    <property type="match status" value="1"/>
</dbReference>
<dbReference type="PANTHER" id="PTHR13479">
    <property type="entry name" value="30S RIBOSOMAL PROTEIN S18"/>
    <property type="match status" value="1"/>
</dbReference>
<dbReference type="PANTHER" id="PTHR13479:SF40">
    <property type="entry name" value="SMALL RIBOSOMAL SUBUNIT PROTEIN BS18M"/>
    <property type="match status" value="1"/>
</dbReference>
<dbReference type="Pfam" id="PF01084">
    <property type="entry name" value="Ribosomal_S18"/>
    <property type="match status" value="1"/>
</dbReference>
<dbReference type="PRINTS" id="PR00974">
    <property type="entry name" value="RIBOSOMALS18"/>
</dbReference>
<dbReference type="SUPFAM" id="SSF46911">
    <property type="entry name" value="Ribosomal protein S18"/>
    <property type="match status" value="1"/>
</dbReference>
<dbReference type="PROSITE" id="PS00057">
    <property type="entry name" value="RIBOSOMAL_S18"/>
    <property type="match status" value="1"/>
</dbReference>
<proteinExistence type="inferred from homology"/>
<sequence>MARPTGKKFDKRRQQQNPLFKRKKFCRFTAAGVEQIDYKDTETLKDFIGENGKITPARLTGTKAHYQRQLDTAIKRARFLALLPYTDQHKA</sequence>
<keyword id="KW-0687">Ribonucleoprotein</keyword>
<keyword id="KW-0689">Ribosomal protein</keyword>
<keyword id="KW-0694">RNA-binding</keyword>
<keyword id="KW-0699">rRNA-binding</keyword>
<feature type="chain" id="PRO_1000003465" description="Small ribosomal subunit protein bS18">
    <location>
        <begin position="1"/>
        <end position="91"/>
    </location>
</feature>
<protein>
    <recommendedName>
        <fullName evidence="1">Small ribosomal subunit protein bS18</fullName>
    </recommendedName>
    <alternativeName>
        <fullName evidence="2">30S ribosomal protein S18</fullName>
    </alternativeName>
</protein>
<evidence type="ECO:0000255" key="1">
    <source>
        <dbReference type="HAMAP-Rule" id="MF_00270"/>
    </source>
</evidence>
<evidence type="ECO:0000305" key="2"/>
<accession>A3NAB4</accession>
<gene>
    <name evidence="1" type="primary">rpsR</name>
    <name type="ordered locus">BURPS668_2250</name>
</gene>
<comment type="function">
    <text evidence="1">Binds as a heterodimer with protein bS6 to the central domain of the 16S rRNA, where it helps stabilize the platform of the 30S subunit.</text>
</comment>
<comment type="subunit">
    <text evidence="1">Part of the 30S ribosomal subunit. Forms a tight heterodimer with protein bS6.</text>
</comment>
<comment type="similarity">
    <text evidence="1">Belongs to the bacterial ribosomal protein bS18 family.</text>
</comment>
<name>RS18_BURP6</name>
<organism>
    <name type="scientific">Burkholderia pseudomallei (strain 668)</name>
    <dbReference type="NCBI Taxonomy" id="320373"/>
    <lineage>
        <taxon>Bacteria</taxon>
        <taxon>Pseudomonadati</taxon>
        <taxon>Pseudomonadota</taxon>
        <taxon>Betaproteobacteria</taxon>
        <taxon>Burkholderiales</taxon>
        <taxon>Burkholderiaceae</taxon>
        <taxon>Burkholderia</taxon>
        <taxon>pseudomallei group</taxon>
    </lineage>
</organism>